<evidence type="ECO:0000255" key="1"/>
<evidence type="ECO:0000255" key="2">
    <source>
        <dbReference type="PROSITE-ProRule" id="PRU00082"/>
    </source>
</evidence>
<evidence type="ECO:0000256" key="3">
    <source>
        <dbReference type="SAM" id="MobiDB-lite"/>
    </source>
</evidence>
<evidence type="ECO:0000305" key="4"/>
<keyword id="KW-1003">Cell membrane</keyword>
<keyword id="KW-0325">Glycoprotein</keyword>
<keyword id="KW-0336">GPI-anchor</keyword>
<keyword id="KW-0449">Lipoprotein</keyword>
<keyword id="KW-0472">Membrane</keyword>
<keyword id="KW-0654">Proteoglycan</keyword>
<keyword id="KW-1185">Reference proteome</keyword>
<keyword id="KW-0732">Signal</keyword>
<comment type="function">
    <text>May be a cell surface adhesion protein.</text>
</comment>
<comment type="subcellular location">
    <subcellularLocation>
        <location>Cell membrane</location>
        <topology>Lipid-anchor</topology>
        <topology>GPI-anchor</topology>
    </subcellularLocation>
</comment>
<comment type="similarity">
    <text evidence="4">Belongs to the fasciclin-like AGP family.</text>
</comment>
<comment type="caution">
    <text evidence="4">It is uncertain whether Met-1 or Met-4 is the initiator.</text>
</comment>
<comment type="sequence caution" evidence="4">
    <conflict type="erroneous initiation">
        <sequence resource="EMBL-CDS" id="AAM61109"/>
    </conflict>
</comment>
<reference key="1">
    <citation type="journal article" date="2001" name="Plant Mol. Biol.">
        <title>The complex structures of arabinogalactan-proteins and the journey towards understanding function.</title>
        <authorList>
            <person name="Gaspar Y."/>
            <person name="Johnson K.L."/>
            <person name="McKenna J.A."/>
            <person name="Bacic A."/>
            <person name="Schultz C.J."/>
        </authorList>
    </citation>
    <scope>NUCLEOTIDE SEQUENCE [MRNA]</scope>
</reference>
<reference key="2">
    <citation type="journal article" date="1999" name="Nature">
        <title>Sequence and analysis of chromosome 2 of the plant Arabidopsis thaliana.</title>
        <authorList>
            <person name="Lin X."/>
            <person name="Kaul S."/>
            <person name="Rounsley S.D."/>
            <person name="Shea T.P."/>
            <person name="Benito M.-I."/>
            <person name="Town C.D."/>
            <person name="Fujii C.Y."/>
            <person name="Mason T.M."/>
            <person name="Bowman C.L."/>
            <person name="Barnstead M.E."/>
            <person name="Feldblyum T.V."/>
            <person name="Buell C.R."/>
            <person name="Ketchum K.A."/>
            <person name="Lee J.J."/>
            <person name="Ronning C.M."/>
            <person name="Koo H.L."/>
            <person name="Moffat K.S."/>
            <person name="Cronin L.A."/>
            <person name="Shen M."/>
            <person name="Pai G."/>
            <person name="Van Aken S."/>
            <person name="Umayam L."/>
            <person name="Tallon L.J."/>
            <person name="Gill J.E."/>
            <person name="Adams M.D."/>
            <person name="Carrera A.J."/>
            <person name="Creasy T.H."/>
            <person name="Goodman H.M."/>
            <person name="Somerville C.R."/>
            <person name="Copenhaver G.P."/>
            <person name="Preuss D."/>
            <person name="Nierman W.C."/>
            <person name="White O."/>
            <person name="Eisen J.A."/>
            <person name="Salzberg S.L."/>
            <person name="Fraser C.M."/>
            <person name="Venter J.C."/>
        </authorList>
    </citation>
    <scope>NUCLEOTIDE SEQUENCE [LARGE SCALE GENOMIC DNA]</scope>
    <source>
        <strain>cv. Columbia</strain>
    </source>
</reference>
<reference key="3">
    <citation type="journal article" date="2017" name="Plant J.">
        <title>Araport11: a complete reannotation of the Arabidopsis thaliana reference genome.</title>
        <authorList>
            <person name="Cheng C.Y."/>
            <person name="Krishnakumar V."/>
            <person name="Chan A.P."/>
            <person name="Thibaud-Nissen F."/>
            <person name="Schobel S."/>
            <person name="Town C.D."/>
        </authorList>
    </citation>
    <scope>GENOME REANNOTATION</scope>
    <source>
        <strain>cv. Columbia</strain>
    </source>
</reference>
<reference key="4">
    <citation type="submission" date="1998-08" db="EMBL/GenBank/DDBJ databases">
        <title>Signal peptide selection derived cDNAs from Arabidopsis thaliana leaves and guard cells.</title>
        <authorList>
            <person name="Stracke R."/>
            <person name="Palme K."/>
        </authorList>
    </citation>
    <scope>NUCLEOTIDE SEQUENCE [LARGE SCALE MRNA]</scope>
    <source>
        <tissue>Leaf</tissue>
    </source>
</reference>
<reference key="5">
    <citation type="journal article" date="2003" name="Science">
        <title>Empirical analysis of transcriptional activity in the Arabidopsis genome.</title>
        <authorList>
            <person name="Yamada K."/>
            <person name="Lim J."/>
            <person name="Dale J.M."/>
            <person name="Chen H."/>
            <person name="Shinn P."/>
            <person name="Palm C.J."/>
            <person name="Southwick A.M."/>
            <person name="Wu H.C."/>
            <person name="Kim C.J."/>
            <person name="Nguyen M."/>
            <person name="Pham P.K."/>
            <person name="Cheuk R.F."/>
            <person name="Karlin-Newmann G."/>
            <person name="Liu S.X."/>
            <person name="Lam B."/>
            <person name="Sakano H."/>
            <person name="Wu T."/>
            <person name="Yu G."/>
            <person name="Miranda M."/>
            <person name="Quach H.L."/>
            <person name="Tripp M."/>
            <person name="Chang C.H."/>
            <person name="Lee J.M."/>
            <person name="Toriumi M.J."/>
            <person name="Chan M.M."/>
            <person name="Tang C.C."/>
            <person name="Onodera C.S."/>
            <person name="Deng J.M."/>
            <person name="Akiyama K."/>
            <person name="Ansari Y."/>
            <person name="Arakawa T."/>
            <person name="Banh J."/>
            <person name="Banno F."/>
            <person name="Bowser L."/>
            <person name="Brooks S.Y."/>
            <person name="Carninci P."/>
            <person name="Chao Q."/>
            <person name="Choy N."/>
            <person name="Enju A."/>
            <person name="Goldsmith A.D."/>
            <person name="Gurjal M."/>
            <person name="Hansen N.F."/>
            <person name="Hayashizaki Y."/>
            <person name="Johnson-Hopson C."/>
            <person name="Hsuan V.W."/>
            <person name="Iida K."/>
            <person name="Karnes M."/>
            <person name="Khan S."/>
            <person name="Koesema E."/>
            <person name="Ishida J."/>
            <person name="Jiang P.X."/>
            <person name="Jones T."/>
            <person name="Kawai J."/>
            <person name="Kamiya A."/>
            <person name="Meyers C."/>
            <person name="Nakajima M."/>
            <person name="Narusaka M."/>
            <person name="Seki M."/>
            <person name="Sakurai T."/>
            <person name="Satou M."/>
            <person name="Tamse R."/>
            <person name="Vaysberg M."/>
            <person name="Wallender E.K."/>
            <person name="Wong C."/>
            <person name="Yamamura Y."/>
            <person name="Yuan S."/>
            <person name="Shinozaki K."/>
            <person name="Davis R.W."/>
            <person name="Theologis A."/>
            <person name="Ecker J.R."/>
        </authorList>
    </citation>
    <scope>NUCLEOTIDE SEQUENCE [LARGE SCALE MRNA]</scope>
    <source>
        <strain>cv. Columbia</strain>
    </source>
</reference>
<reference key="6">
    <citation type="submission" date="2002-03" db="EMBL/GenBank/DDBJ databases">
        <title>Full-length cDNA from Arabidopsis thaliana.</title>
        <authorList>
            <person name="Brover V.V."/>
            <person name="Troukhan M.E."/>
            <person name="Alexandrov N.A."/>
            <person name="Lu Y.-P."/>
            <person name="Flavell R.B."/>
            <person name="Feldmann K.A."/>
        </authorList>
    </citation>
    <scope>NUCLEOTIDE SEQUENCE [LARGE SCALE MRNA]</scope>
</reference>
<reference key="7">
    <citation type="journal article" date="2003" name="Plant Physiol.">
        <title>The fasciclin-like arabinogalactan proteins of Arabidopsis. A multigene family of putative cell adhesion molecules.</title>
        <authorList>
            <person name="Johnson K.L."/>
            <person name="Jones B.J."/>
            <person name="Bacic A."/>
            <person name="Schultz C.J."/>
        </authorList>
    </citation>
    <scope>GENE FAMILY ORGANIZATION</scope>
    <scope>NOMENCLATURE</scope>
</reference>
<sequence>MAKMQLSIFIAVVALIVCSASAKTASPPAPVLPPTPAPAPAPENVNLTELLSVAGPFHTFLDYLLSTGVIETFQNQANNTEEGITIFVPKDDAFKAQKNPPLSNLTKDQLKQLVLFHALPHYYSLSEFKNLSQSGPVSTFAGGQYSLKFTDVSGTVRIDSLWTRTKVSSSVFSTDPVAVYQVNRVLLPEAIFGTDVPPMPAPAPAPIVSAPSDSPSVADSEGASSPKSSHKNSGQKLLLAPISMVISGLVALFL</sequence>
<feature type="signal peptide" evidence="1">
    <location>
        <begin position="1"/>
        <end position="22"/>
    </location>
</feature>
<feature type="chain" id="PRO_0000008778" description="Fasciclin-like arabinogalactan protein 7">
    <location>
        <begin position="23"/>
        <end position="232"/>
    </location>
</feature>
<feature type="propeptide" id="PRO_0000008779" description="Removed in mature form" evidence="1">
    <location>
        <begin position="233"/>
        <end position="254"/>
    </location>
</feature>
<feature type="domain" description="FAS1" evidence="2">
    <location>
        <begin position="44"/>
        <end position="186"/>
    </location>
</feature>
<feature type="region of interest" description="Disordered" evidence="3">
    <location>
        <begin position="203"/>
        <end position="233"/>
    </location>
</feature>
<feature type="compositionally biased region" description="Low complexity" evidence="3">
    <location>
        <begin position="206"/>
        <end position="220"/>
    </location>
</feature>
<feature type="compositionally biased region" description="Polar residues" evidence="3">
    <location>
        <begin position="222"/>
        <end position="233"/>
    </location>
</feature>
<feature type="lipid moiety-binding region" description="GPI-anchor amidated asparagine" evidence="1">
    <location>
        <position position="232"/>
    </location>
</feature>
<feature type="glycosylation site" description="N-linked (GlcNAc...) asparagine" evidence="1">
    <location>
        <position position="46"/>
    </location>
</feature>
<feature type="glycosylation site" description="N-linked (GlcNAc...) asparagine" evidence="1">
    <location>
        <position position="78"/>
    </location>
</feature>
<feature type="glycosylation site" description="N-linked (GlcNAc...) asparagine" evidence="1">
    <location>
        <position position="104"/>
    </location>
</feature>
<feature type="glycosylation site" description="N-linked (GlcNAc...) asparagine" evidence="1">
    <location>
        <position position="130"/>
    </location>
</feature>
<feature type="sequence conflict" description="In Ref. 6; AAM61109." evidence="4" ref="6">
    <original>V</original>
    <variation>L</variation>
    <location>
        <position position="182"/>
    </location>
</feature>
<organism>
    <name type="scientific">Arabidopsis thaliana</name>
    <name type="common">Mouse-ear cress</name>
    <dbReference type="NCBI Taxonomy" id="3702"/>
    <lineage>
        <taxon>Eukaryota</taxon>
        <taxon>Viridiplantae</taxon>
        <taxon>Streptophyta</taxon>
        <taxon>Embryophyta</taxon>
        <taxon>Tracheophyta</taxon>
        <taxon>Spermatophyta</taxon>
        <taxon>Magnoliopsida</taxon>
        <taxon>eudicotyledons</taxon>
        <taxon>Gunneridae</taxon>
        <taxon>Pentapetalae</taxon>
        <taxon>rosids</taxon>
        <taxon>malvids</taxon>
        <taxon>Brassicales</taxon>
        <taxon>Brassicaceae</taxon>
        <taxon>Camelineae</taxon>
        <taxon>Arabidopsis</taxon>
    </lineage>
</organism>
<name>FLA7_ARATH</name>
<gene>
    <name type="primary">FLA7</name>
    <name type="ordered locus">At2g04780</name>
    <name type="ORF">F28I8.18</name>
</gene>
<proteinExistence type="evidence at transcript level"/>
<dbReference type="EMBL" id="AF333973">
    <property type="protein sequence ID" value="AAK20860.1"/>
    <property type="molecule type" value="mRNA"/>
</dbReference>
<dbReference type="EMBL" id="AC006955">
    <property type="protein sequence ID" value="AAD22328.1"/>
    <property type="molecule type" value="Genomic_DNA"/>
</dbReference>
<dbReference type="EMBL" id="CP002685">
    <property type="protein sequence ID" value="AEC05861.1"/>
    <property type="molecule type" value="Genomic_DNA"/>
</dbReference>
<dbReference type="EMBL" id="CP002685">
    <property type="protein sequence ID" value="AEC05862.1"/>
    <property type="molecule type" value="Genomic_DNA"/>
</dbReference>
<dbReference type="EMBL" id="AF083754">
    <property type="protein sequence ID" value="AAN60312.1"/>
    <property type="molecule type" value="mRNA"/>
</dbReference>
<dbReference type="EMBL" id="AY094449">
    <property type="protein sequence ID" value="AAM19820.1"/>
    <property type="molecule type" value="mRNA"/>
</dbReference>
<dbReference type="EMBL" id="BT001123">
    <property type="protein sequence ID" value="AAN64514.1"/>
    <property type="molecule type" value="mRNA"/>
</dbReference>
<dbReference type="EMBL" id="AY084541">
    <property type="protein sequence ID" value="AAM61109.1"/>
    <property type="status" value="ALT_INIT"/>
    <property type="molecule type" value="mRNA"/>
</dbReference>
<dbReference type="PIR" id="D84461">
    <property type="entry name" value="D84461"/>
</dbReference>
<dbReference type="RefSeq" id="NP_565313.1">
    <property type="nucleotide sequence ID" value="NM_126508.5"/>
</dbReference>
<dbReference type="RefSeq" id="NP_849935.1">
    <property type="nucleotide sequence ID" value="NM_179604.2"/>
</dbReference>
<dbReference type="SMR" id="Q9SJ81"/>
<dbReference type="BioGRID" id="422">
    <property type="interactions" value="2"/>
</dbReference>
<dbReference type="FunCoup" id="Q9SJ81">
    <property type="interactions" value="331"/>
</dbReference>
<dbReference type="STRING" id="3702.Q9SJ81"/>
<dbReference type="GlyCosmos" id="Q9SJ81">
    <property type="glycosylation" value="4 sites, No reported glycans"/>
</dbReference>
<dbReference type="GlyGen" id="Q9SJ81">
    <property type="glycosylation" value="5 sites"/>
</dbReference>
<dbReference type="PaxDb" id="3702-AT2G04780.2"/>
<dbReference type="ProteomicsDB" id="230950"/>
<dbReference type="EnsemblPlants" id="AT2G04780.1">
    <property type="protein sequence ID" value="AT2G04780.1"/>
    <property type="gene ID" value="AT2G04780"/>
</dbReference>
<dbReference type="EnsemblPlants" id="AT2G04780.2">
    <property type="protein sequence ID" value="AT2G04780.2"/>
    <property type="gene ID" value="AT2G04780"/>
</dbReference>
<dbReference type="GeneID" id="815021"/>
<dbReference type="Gramene" id="AT2G04780.1">
    <property type="protein sequence ID" value="AT2G04780.1"/>
    <property type="gene ID" value="AT2G04780"/>
</dbReference>
<dbReference type="Gramene" id="AT2G04780.2">
    <property type="protein sequence ID" value="AT2G04780.2"/>
    <property type="gene ID" value="AT2G04780"/>
</dbReference>
<dbReference type="KEGG" id="ath:AT2G04780"/>
<dbReference type="Araport" id="AT2G04780"/>
<dbReference type="TAIR" id="AT2G04780">
    <property type="gene designation" value="FLA7"/>
</dbReference>
<dbReference type="eggNOG" id="ENOG502QV96">
    <property type="taxonomic scope" value="Eukaryota"/>
</dbReference>
<dbReference type="HOGENOM" id="CLU_067693_2_0_1"/>
<dbReference type="InParanoid" id="Q9SJ81"/>
<dbReference type="OMA" id="MEITMIF"/>
<dbReference type="PhylomeDB" id="Q9SJ81"/>
<dbReference type="PRO" id="PR:Q9SJ81"/>
<dbReference type="Proteomes" id="UP000006548">
    <property type="component" value="Chromosome 2"/>
</dbReference>
<dbReference type="ExpressionAtlas" id="Q9SJ81">
    <property type="expression patterns" value="baseline and differential"/>
</dbReference>
<dbReference type="GO" id="GO:0005739">
    <property type="term" value="C:mitochondrion"/>
    <property type="evidence" value="ECO:0007005"/>
    <property type="project" value="TAIR"/>
</dbReference>
<dbReference type="GO" id="GO:0005886">
    <property type="term" value="C:plasma membrane"/>
    <property type="evidence" value="ECO:0007005"/>
    <property type="project" value="TAIR"/>
</dbReference>
<dbReference type="GO" id="GO:0099503">
    <property type="term" value="C:secretory vesicle"/>
    <property type="evidence" value="ECO:0007005"/>
    <property type="project" value="TAIR"/>
</dbReference>
<dbReference type="GO" id="GO:0098552">
    <property type="term" value="C:side of membrane"/>
    <property type="evidence" value="ECO:0007669"/>
    <property type="project" value="UniProtKB-KW"/>
</dbReference>
<dbReference type="FunFam" id="2.30.180.10:FF:000012">
    <property type="entry name" value="Fasciclin-like arabinogalactan protein 7"/>
    <property type="match status" value="1"/>
</dbReference>
<dbReference type="Gene3D" id="2.30.180.10">
    <property type="entry name" value="FAS1 domain"/>
    <property type="match status" value="1"/>
</dbReference>
<dbReference type="InterPro" id="IPR036378">
    <property type="entry name" value="FAS1_dom_sf"/>
</dbReference>
<dbReference type="InterPro" id="IPR000782">
    <property type="entry name" value="FAS1_domain"/>
</dbReference>
<dbReference type="InterPro" id="IPR045003">
    <property type="entry name" value="FLA_A"/>
</dbReference>
<dbReference type="PANTHER" id="PTHR32077">
    <property type="entry name" value="FASCICLIN-LIKE ARABINOGALACTAN PROTEIN"/>
    <property type="match status" value="1"/>
</dbReference>
<dbReference type="PANTHER" id="PTHR32077:SF3">
    <property type="entry name" value="FASCICLIN-LIKE ARABINOGALACTAN PROTEIN 7"/>
    <property type="match status" value="1"/>
</dbReference>
<dbReference type="Pfam" id="PF02469">
    <property type="entry name" value="Fasciclin"/>
    <property type="match status" value="1"/>
</dbReference>
<dbReference type="SMART" id="SM00554">
    <property type="entry name" value="FAS1"/>
    <property type="match status" value="1"/>
</dbReference>
<dbReference type="SUPFAM" id="SSF82153">
    <property type="entry name" value="FAS1 domain"/>
    <property type="match status" value="1"/>
</dbReference>
<dbReference type="PROSITE" id="PS50213">
    <property type="entry name" value="FAS1"/>
    <property type="match status" value="1"/>
</dbReference>
<accession>Q9SJ81</accession>
<accession>Q8LG01</accession>
<protein>
    <recommendedName>
        <fullName>Fasciclin-like arabinogalactan protein 7</fullName>
    </recommendedName>
</protein>